<evidence type="ECO:0000255" key="1">
    <source>
        <dbReference type="HAMAP-Rule" id="MF_00102"/>
    </source>
</evidence>
<evidence type="ECO:0000305" key="2"/>
<proteinExistence type="inferred from homology"/>
<reference key="1">
    <citation type="journal article" date="2010" name="PLoS ONE">
        <title>The complete genome sequence of Cupriavidus metallidurans strain CH34, a master survivalist in harsh and anthropogenic environments.</title>
        <authorList>
            <person name="Janssen P.J."/>
            <person name="Van Houdt R."/>
            <person name="Moors H."/>
            <person name="Monsieurs P."/>
            <person name="Morin N."/>
            <person name="Michaux A."/>
            <person name="Benotmane M.A."/>
            <person name="Leys N."/>
            <person name="Vallaeys T."/>
            <person name="Lapidus A."/>
            <person name="Monchy S."/>
            <person name="Medigue C."/>
            <person name="Taghavi S."/>
            <person name="McCorkle S."/>
            <person name="Dunn J."/>
            <person name="van der Lelie D."/>
            <person name="Mergeay M."/>
        </authorList>
    </citation>
    <scope>NUCLEOTIDE SEQUENCE [LARGE SCALE GENOMIC DNA]</scope>
    <source>
        <strain>ATCC 43123 / DSM 2839 / NBRC 102507 / CH34</strain>
    </source>
</reference>
<feature type="chain" id="PRO_1000008617" description="4-hydroxy-tetrahydrodipicolinate reductase">
    <location>
        <begin position="1"/>
        <end position="265"/>
    </location>
</feature>
<feature type="active site" description="Proton donor/acceptor" evidence="1">
    <location>
        <position position="153"/>
    </location>
</feature>
<feature type="active site" description="Proton donor" evidence="1">
    <location>
        <position position="157"/>
    </location>
</feature>
<feature type="binding site" evidence="1">
    <location>
        <begin position="7"/>
        <end position="12"/>
    </location>
    <ligand>
        <name>NAD(+)</name>
        <dbReference type="ChEBI" id="CHEBI:57540"/>
    </ligand>
</feature>
<feature type="binding site" evidence="1">
    <location>
        <position position="33"/>
    </location>
    <ligand>
        <name>NAD(+)</name>
        <dbReference type="ChEBI" id="CHEBI:57540"/>
    </ligand>
</feature>
<feature type="binding site" evidence="1">
    <location>
        <begin position="96"/>
        <end position="98"/>
    </location>
    <ligand>
        <name>NAD(+)</name>
        <dbReference type="ChEBI" id="CHEBI:57540"/>
    </ligand>
</feature>
<feature type="binding site" evidence="1">
    <location>
        <begin position="120"/>
        <end position="123"/>
    </location>
    <ligand>
        <name>NAD(+)</name>
        <dbReference type="ChEBI" id="CHEBI:57540"/>
    </ligand>
</feature>
<feature type="binding site" evidence="1">
    <location>
        <position position="154"/>
    </location>
    <ligand>
        <name>(S)-2,3,4,5-tetrahydrodipicolinate</name>
        <dbReference type="ChEBI" id="CHEBI:16845"/>
    </ligand>
</feature>
<feature type="binding site" evidence="1">
    <location>
        <begin position="163"/>
        <end position="164"/>
    </location>
    <ligand>
        <name>(S)-2,3,4,5-tetrahydrodipicolinate</name>
        <dbReference type="ChEBI" id="CHEBI:16845"/>
    </ligand>
</feature>
<name>DAPB_CUPMC</name>
<comment type="function">
    <text evidence="1">Catalyzes the conversion of 4-hydroxy-tetrahydrodipicolinate (HTPA) to tetrahydrodipicolinate.</text>
</comment>
<comment type="catalytic activity">
    <reaction evidence="1">
        <text>(S)-2,3,4,5-tetrahydrodipicolinate + NAD(+) + H2O = (2S,4S)-4-hydroxy-2,3,4,5-tetrahydrodipicolinate + NADH + H(+)</text>
        <dbReference type="Rhea" id="RHEA:35323"/>
        <dbReference type="ChEBI" id="CHEBI:15377"/>
        <dbReference type="ChEBI" id="CHEBI:15378"/>
        <dbReference type="ChEBI" id="CHEBI:16845"/>
        <dbReference type="ChEBI" id="CHEBI:57540"/>
        <dbReference type="ChEBI" id="CHEBI:57945"/>
        <dbReference type="ChEBI" id="CHEBI:67139"/>
        <dbReference type="EC" id="1.17.1.8"/>
    </reaction>
</comment>
<comment type="catalytic activity">
    <reaction evidence="1">
        <text>(S)-2,3,4,5-tetrahydrodipicolinate + NADP(+) + H2O = (2S,4S)-4-hydroxy-2,3,4,5-tetrahydrodipicolinate + NADPH + H(+)</text>
        <dbReference type="Rhea" id="RHEA:35331"/>
        <dbReference type="ChEBI" id="CHEBI:15377"/>
        <dbReference type="ChEBI" id="CHEBI:15378"/>
        <dbReference type="ChEBI" id="CHEBI:16845"/>
        <dbReference type="ChEBI" id="CHEBI:57783"/>
        <dbReference type="ChEBI" id="CHEBI:58349"/>
        <dbReference type="ChEBI" id="CHEBI:67139"/>
        <dbReference type="EC" id="1.17.1.8"/>
    </reaction>
</comment>
<comment type="pathway">
    <text evidence="1">Amino-acid biosynthesis; L-lysine biosynthesis via DAP pathway; (S)-tetrahydrodipicolinate from L-aspartate: step 4/4.</text>
</comment>
<comment type="subcellular location">
    <subcellularLocation>
        <location evidence="1">Cytoplasm</location>
    </subcellularLocation>
</comment>
<comment type="similarity">
    <text evidence="1">Belongs to the DapB family.</text>
</comment>
<comment type="caution">
    <text evidence="2">Was originally thought to be a dihydrodipicolinate reductase (DHDPR), catalyzing the conversion of dihydrodipicolinate to tetrahydrodipicolinate. However, it was shown in E.coli that the substrate of the enzymatic reaction is not dihydrodipicolinate (DHDP) but in fact (2S,4S)-4-hydroxy-2,3,4,5-tetrahydrodipicolinic acid (HTPA), the product released by the DapA-catalyzed reaction.</text>
</comment>
<accession>Q1LJ29</accession>
<gene>
    <name evidence="1" type="primary">dapB</name>
    <name type="ordered locus">Rmet_2974</name>
</gene>
<keyword id="KW-0028">Amino-acid biosynthesis</keyword>
<keyword id="KW-0963">Cytoplasm</keyword>
<keyword id="KW-0220">Diaminopimelate biosynthesis</keyword>
<keyword id="KW-0457">Lysine biosynthesis</keyword>
<keyword id="KW-0520">NAD</keyword>
<keyword id="KW-0521">NADP</keyword>
<keyword id="KW-0560">Oxidoreductase</keyword>
<keyword id="KW-1185">Reference proteome</keyword>
<organism>
    <name type="scientific">Cupriavidus metallidurans (strain ATCC 43123 / DSM 2839 / NBRC 102507 / CH34)</name>
    <name type="common">Ralstonia metallidurans</name>
    <dbReference type="NCBI Taxonomy" id="266264"/>
    <lineage>
        <taxon>Bacteria</taxon>
        <taxon>Pseudomonadati</taxon>
        <taxon>Pseudomonadota</taxon>
        <taxon>Betaproteobacteria</taxon>
        <taxon>Burkholderiales</taxon>
        <taxon>Burkholderiaceae</taxon>
        <taxon>Cupriavidus</taxon>
    </lineage>
</organism>
<dbReference type="EC" id="1.17.1.8" evidence="1"/>
<dbReference type="EMBL" id="CP000352">
    <property type="protein sequence ID" value="ABF09847.1"/>
    <property type="molecule type" value="Genomic_DNA"/>
</dbReference>
<dbReference type="RefSeq" id="WP_011517509.1">
    <property type="nucleotide sequence ID" value="NC_007973.1"/>
</dbReference>
<dbReference type="SMR" id="Q1LJ29"/>
<dbReference type="STRING" id="266264.Rmet_2974"/>
<dbReference type="KEGG" id="rme:Rmet_2974"/>
<dbReference type="eggNOG" id="COG0289">
    <property type="taxonomic scope" value="Bacteria"/>
</dbReference>
<dbReference type="HOGENOM" id="CLU_047479_2_1_4"/>
<dbReference type="UniPathway" id="UPA00034">
    <property type="reaction ID" value="UER00018"/>
</dbReference>
<dbReference type="Proteomes" id="UP000002429">
    <property type="component" value="Chromosome"/>
</dbReference>
<dbReference type="GO" id="GO:0005829">
    <property type="term" value="C:cytosol"/>
    <property type="evidence" value="ECO:0007669"/>
    <property type="project" value="TreeGrafter"/>
</dbReference>
<dbReference type="GO" id="GO:0008839">
    <property type="term" value="F:4-hydroxy-tetrahydrodipicolinate reductase"/>
    <property type="evidence" value="ECO:0007669"/>
    <property type="project" value="UniProtKB-EC"/>
</dbReference>
<dbReference type="GO" id="GO:0051287">
    <property type="term" value="F:NAD binding"/>
    <property type="evidence" value="ECO:0007669"/>
    <property type="project" value="UniProtKB-UniRule"/>
</dbReference>
<dbReference type="GO" id="GO:0050661">
    <property type="term" value="F:NADP binding"/>
    <property type="evidence" value="ECO:0007669"/>
    <property type="project" value="UniProtKB-UniRule"/>
</dbReference>
<dbReference type="GO" id="GO:0016726">
    <property type="term" value="F:oxidoreductase activity, acting on CH or CH2 groups, NAD or NADP as acceptor"/>
    <property type="evidence" value="ECO:0007669"/>
    <property type="project" value="UniProtKB-UniRule"/>
</dbReference>
<dbReference type="GO" id="GO:0019877">
    <property type="term" value="P:diaminopimelate biosynthetic process"/>
    <property type="evidence" value="ECO:0007669"/>
    <property type="project" value="UniProtKB-UniRule"/>
</dbReference>
<dbReference type="GO" id="GO:0009089">
    <property type="term" value="P:lysine biosynthetic process via diaminopimelate"/>
    <property type="evidence" value="ECO:0007669"/>
    <property type="project" value="UniProtKB-UniRule"/>
</dbReference>
<dbReference type="CDD" id="cd02274">
    <property type="entry name" value="DHDPR_N"/>
    <property type="match status" value="1"/>
</dbReference>
<dbReference type="FunFam" id="3.30.360.10:FF:000004">
    <property type="entry name" value="4-hydroxy-tetrahydrodipicolinate reductase"/>
    <property type="match status" value="1"/>
</dbReference>
<dbReference type="FunFam" id="3.40.50.720:FF:000048">
    <property type="entry name" value="4-hydroxy-tetrahydrodipicolinate reductase"/>
    <property type="match status" value="1"/>
</dbReference>
<dbReference type="Gene3D" id="3.30.360.10">
    <property type="entry name" value="Dihydrodipicolinate Reductase, domain 2"/>
    <property type="match status" value="1"/>
</dbReference>
<dbReference type="Gene3D" id="3.40.50.720">
    <property type="entry name" value="NAD(P)-binding Rossmann-like Domain"/>
    <property type="match status" value="1"/>
</dbReference>
<dbReference type="HAMAP" id="MF_00102">
    <property type="entry name" value="DapB"/>
    <property type="match status" value="1"/>
</dbReference>
<dbReference type="InterPro" id="IPR022663">
    <property type="entry name" value="DapB_C"/>
</dbReference>
<dbReference type="InterPro" id="IPR000846">
    <property type="entry name" value="DapB_N"/>
</dbReference>
<dbReference type="InterPro" id="IPR022664">
    <property type="entry name" value="DapB_N_CS"/>
</dbReference>
<dbReference type="InterPro" id="IPR023940">
    <property type="entry name" value="DHDPR_bac"/>
</dbReference>
<dbReference type="InterPro" id="IPR036291">
    <property type="entry name" value="NAD(P)-bd_dom_sf"/>
</dbReference>
<dbReference type="NCBIfam" id="TIGR00036">
    <property type="entry name" value="dapB"/>
    <property type="match status" value="1"/>
</dbReference>
<dbReference type="PANTHER" id="PTHR20836:SF0">
    <property type="entry name" value="4-HYDROXY-TETRAHYDRODIPICOLINATE REDUCTASE 1, CHLOROPLASTIC-RELATED"/>
    <property type="match status" value="1"/>
</dbReference>
<dbReference type="PANTHER" id="PTHR20836">
    <property type="entry name" value="DIHYDRODIPICOLINATE REDUCTASE"/>
    <property type="match status" value="1"/>
</dbReference>
<dbReference type="Pfam" id="PF05173">
    <property type="entry name" value="DapB_C"/>
    <property type="match status" value="1"/>
</dbReference>
<dbReference type="Pfam" id="PF01113">
    <property type="entry name" value="DapB_N"/>
    <property type="match status" value="1"/>
</dbReference>
<dbReference type="PIRSF" id="PIRSF000161">
    <property type="entry name" value="DHPR"/>
    <property type="match status" value="1"/>
</dbReference>
<dbReference type="SUPFAM" id="SSF55347">
    <property type="entry name" value="Glyceraldehyde-3-phosphate dehydrogenase-like, C-terminal domain"/>
    <property type="match status" value="1"/>
</dbReference>
<dbReference type="SUPFAM" id="SSF51735">
    <property type="entry name" value="NAD(P)-binding Rossmann-fold domains"/>
    <property type="match status" value="1"/>
</dbReference>
<dbReference type="PROSITE" id="PS01298">
    <property type="entry name" value="DAPB"/>
    <property type="match status" value="1"/>
</dbReference>
<protein>
    <recommendedName>
        <fullName evidence="1">4-hydroxy-tetrahydrodipicolinate reductase</fullName>
        <shortName evidence="1">HTPA reductase</shortName>
        <ecNumber evidence="1">1.17.1.8</ecNumber>
    </recommendedName>
</protein>
<sequence length="265" mass="27406">MKIAIAGASGRMGRMLIETVLNTDGVTLAGALDVPGAAALGQDAGLFLGRETGIKISSDIEAVLSAADCLIDFTRPEGTLAHLAVAKRLGKKMVIGTTGFDAAGKQALADAAKSIGVVFAANMSVGVNATFKLLEVAAKLLSTGYDIEIIEAHHRHKVDAPSGTALAMGEVVAKAIGRDLDECAVYAREGHTGPRDAKSIGFATVRGGDIVGDHTVMFAGIGERIEISHKSSSRQSYADGAVRAARFLADKPSGMFDMQDVLGLK</sequence>